<organism>
    <name type="scientific">Microcystis aeruginosa (strain NIES-843 / IAM M-2473)</name>
    <dbReference type="NCBI Taxonomy" id="449447"/>
    <lineage>
        <taxon>Bacteria</taxon>
        <taxon>Bacillati</taxon>
        <taxon>Cyanobacteriota</taxon>
        <taxon>Cyanophyceae</taxon>
        <taxon>Oscillatoriophycideae</taxon>
        <taxon>Chroococcales</taxon>
        <taxon>Microcystaceae</taxon>
        <taxon>Microcystis</taxon>
    </lineage>
</organism>
<feature type="chain" id="PRO_1000074356" description="SsrA-binding protein">
    <location>
        <begin position="1"/>
        <end position="154"/>
    </location>
</feature>
<feature type="region of interest" description="Disordered" evidence="2">
    <location>
        <begin position="135"/>
        <end position="154"/>
    </location>
</feature>
<gene>
    <name evidence="1" type="primary">smpB</name>
    <name type="ordered locus">MAE_44420</name>
</gene>
<name>SSRP_MICAN</name>
<dbReference type="EMBL" id="AP009552">
    <property type="protein sequence ID" value="BAG04264.1"/>
    <property type="molecule type" value="Genomic_DNA"/>
</dbReference>
<dbReference type="RefSeq" id="WP_002732921.1">
    <property type="nucleotide sequence ID" value="NC_010296.1"/>
</dbReference>
<dbReference type="SMR" id="B0JTG1"/>
<dbReference type="STRING" id="449447.MAE_44420"/>
<dbReference type="PaxDb" id="449447-MAE_44420"/>
<dbReference type="EnsemblBacteria" id="BAG04264">
    <property type="protein sequence ID" value="BAG04264"/>
    <property type="gene ID" value="MAE_44420"/>
</dbReference>
<dbReference type="KEGG" id="mar:MAE_44420"/>
<dbReference type="eggNOG" id="COG0691">
    <property type="taxonomic scope" value="Bacteria"/>
</dbReference>
<dbReference type="HOGENOM" id="CLU_108953_0_1_3"/>
<dbReference type="BioCyc" id="MAER449447:MAE_RS19245-MONOMER"/>
<dbReference type="Proteomes" id="UP000001510">
    <property type="component" value="Chromosome"/>
</dbReference>
<dbReference type="GO" id="GO:0005829">
    <property type="term" value="C:cytosol"/>
    <property type="evidence" value="ECO:0007669"/>
    <property type="project" value="TreeGrafter"/>
</dbReference>
<dbReference type="GO" id="GO:0003723">
    <property type="term" value="F:RNA binding"/>
    <property type="evidence" value="ECO:0007669"/>
    <property type="project" value="UniProtKB-UniRule"/>
</dbReference>
<dbReference type="GO" id="GO:0070929">
    <property type="term" value="P:trans-translation"/>
    <property type="evidence" value="ECO:0007669"/>
    <property type="project" value="UniProtKB-UniRule"/>
</dbReference>
<dbReference type="CDD" id="cd09294">
    <property type="entry name" value="SmpB"/>
    <property type="match status" value="1"/>
</dbReference>
<dbReference type="Gene3D" id="2.40.280.10">
    <property type="match status" value="1"/>
</dbReference>
<dbReference type="HAMAP" id="MF_00023">
    <property type="entry name" value="SmpB"/>
    <property type="match status" value="1"/>
</dbReference>
<dbReference type="InterPro" id="IPR023620">
    <property type="entry name" value="SmpB"/>
</dbReference>
<dbReference type="InterPro" id="IPR000037">
    <property type="entry name" value="SsrA-bd_prot"/>
</dbReference>
<dbReference type="InterPro" id="IPR020081">
    <property type="entry name" value="SsrA-bd_prot_CS"/>
</dbReference>
<dbReference type="NCBIfam" id="NF003843">
    <property type="entry name" value="PRK05422.1"/>
    <property type="match status" value="1"/>
</dbReference>
<dbReference type="NCBIfam" id="TIGR00086">
    <property type="entry name" value="smpB"/>
    <property type="match status" value="1"/>
</dbReference>
<dbReference type="PANTHER" id="PTHR30308:SF2">
    <property type="entry name" value="SSRA-BINDING PROTEIN"/>
    <property type="match status" value="1"/>
</dbReference>
<dbReference type="PANTHER" id="PTHR30308">
    <property type="entry name" value="TMRNA-BINDING COMPONENT OF TRANS-TRANSLATION TAGGING COMPLEX"/>
    <property type="match status" value="1"/>
</dbReference>
<dbReference type="Pfam" id="PF01668">
    <property type="entry name" value="SmpB"/>
    <property type="match status" value="1"/>
</dbReference>
<dbReference type="SUPFAM" id="SSF74982">
    <property type="entry name" value="Small protein B (SmpB)"/>
    <property type="match status" value="1"/>
</dbReference>
<dbReference type="PROSITE" id="PS01317">
    <property type="entry name" value="SSRP"/>
    <property type="match status" value="1"/>
</dbReference>
<evidence type="ECO:0000255" key="1">
    <source>
        <dbReference type="HAMAP-Rule" id="MF_00023"/>
    </source>
</evidence>
<evidence type="ECO:0000256" key="2">
    <source>
        <dbReference type="SAM" id="MobiDB-lite"/>
    </source>
</evidence>
<reference key="1">
    <citation type="journal article" date="2007" name="DNA Res.">
        <title>Complete genomic structure of the bloom-forming toxic cyanobacterium Microcystis aeruginosa NIES-843.</title>
        <authorList>
            <person name="Kaneko T."/>
            <person name="Nakajima N."/>
            <person name="Okamoto S."/>
            <person name="Suzuki I."/>
            <person name="Tanabe Y."/>
            <person name="Tamaoki M."/>
            <person name="Nakamura Y."/>
            <person name="Kasai F."/>
            <person name="Watanabe A."/>
            <person name="Kawashima K."/>
            <person name="Kishida Y."/>
            <person name="Ono A."/>
            <person name="Shimizu Y."/>
            <person name="Takahashi C."/>
            <person name="Minami C."/>
            <person name="Fujishiro T."/>
            <person name="Kohara M."/>
            <person name="Katoh M."/>
            <person name="Nakazaki N."/>
            <person name="Nakayama S."/>
            <person name="Yamada M."/>
            <person name="Tabata S."/>
            <person name="Watanabe M.M."/>
        </authorList>
    </citation>
    <scope>NUCLEOTIDE SEQUENCE [LARGE SCALE GENOMIC DNA]</scope>
    <source>
        <strain>NIES-843 / IAM M-247</strain>
    </source>
</reference>
<proteinExistence type="inferred from homology"/>
<comment type="function">
    <text evidence="1">Required for rescue of stalled ribosomes mediated by trans-translation. Binds to transfer-messenger RNA (tmRNA), required for stable association of tmRNA with ribosomes. tmRNA and SmpB together mimic tRNA shape, replacing the anticodon stem-loop with SmpB. tmRNA is encoded by the ssrA gene; the 2 termini fold to resemble tRNA(Ala) and it encodes a 'tag peptide', a short internal open reading frame. During trans-translation Ala-aminoacylated tmRNA acts like a tRNA, entering the A-site of stalled ribosomes, displacing the stalled mRNA. The ribosome then switches to translate the ORF on the tmRNA; the nascent peptide is terminated with the 'tag peptide' encoded by the tmRNA and targeted for degradation. The ribosome is freed to recommence translation, which seems to be the essential function of trans-translation.</text>
</comment>
<comment type="subcellular location">
    <subcellularLocation>
        <location evidence="1">Cytoplasm</location>
    </subcellularLocation>
    <text evidence="1">The tmRNA-SmpB complex associates with stalled 70S ribosomes.</text>
</comment>
<comment type="similarity">
    <text evidence="1">Belongs to the SmpB family.</text>
</comment>
<keyword id="KW-0963">Cytoplasm</keyword>
<keyword id="KW-0694">RNA-binding</keyword>
<accession>B0JTG1</accession>
<protein>
    <recommendedName>
        <fullName evidence="1">SsrA-binding protein</fullName>
    </recommendedName>
    <alternativeName>
        <fullName evidence="1">Small protein B</fullName>
    </alternativeName>
</protein>
<sequence length="154" mass="17926">MANQDDKIKIITDNRQARHLYEILETFEAGVQLLGTEVKSVRAGKVNLRDGYVLVRNGEAVLINVHISPYEQSSEYFNHDPRRTRKLLMHKKEISKLIGQVEQKGLTLVPLKMYFKGSWVKISIGLGRGKKLHDKREDLKRRQDQRDMARAMKR</sequence>